<organism>
    <name type="scientific">Caldanaerobacter subterraneus subsp. tengcongensis (strain DSM 15242 / JCM 11007 / NBRC 100824 / MB4)</name>
    <name type="common">Thermoanaerobacter tengcongensis</name>
    <dbReference type="NCBI Taxonomy" id="273068"/>
    <lineage>
        <taxon>Bacteria</taxon>
        <taxon>Bacillati</taxon>
        <taxon>Bacillota</taxon>
        <taxon>Clostridia</taxon>
        <taxon>Thermoanaerobacterales</taxon>
        <taxon>Thermoanaerobacteraceae</taxon>
        <taxon>Caldanaerobacter</taxon>
    </lineage>
</organism>
<dbReference type="EC" id="6.1.1.17" evidence="1"/>
<dbReference type="EMBL" id="AE008691">
    <property type="protein sequence ID" value="AAM25458.1"/>
    <property type="molecule type" value="Genomic_DNA"/>
</dbReference>
<dbReference type="RefSeq" id="WP_011026361.1">
    <property type="nucleotide sequence ID" value="NC_003869.1"/>
</dbReference>
<dbReference type="SMR" id="Q8R7T1"/>
<dbReference type="STRING" id="273068.TTE2317"/>
<dbReference type="KEGG" id="tte:TTE2317"/>
<dbReference type="eggNOG" id="COG0008">
    <property type="taxonomic scope" value="Bacteria"/>
</dbReference>
<dbReference type="HOGENOM" id="CLU_015768_6_3_9"/>
<dbReference type="OrthoDB" id="9807503at2"/>
<dbReference type="Proteomes" id="UP000000555">
    <property type="component" value="Chromosome"/>
</dbReference>
<dbReference type="GO" id="GO:0005829">
    <property type="term" value="C:cytosol"/>
    <property type="evidence" value="ECO:0007669"/>
    <property type="project" value="TreeGrafter"/>
</dbReference>
<dbReference type="GO" id="GO:0005524">
    <property type="term" value="F:ATP binding"/>
    <property type="evidence" value="ECO:0007669"/>
    <property type="project" value="UniProtKB-UniRule"/>
</dbReference>
<dbReference type="GO" id="GO:0004818">
    <property type="term" value="F:glutamate-tRNA ligase activity"/>
    <property type="evidence" value="ECO:0007669"/>
    <property type="project" value="UniProtKB-UniRule"/>
</dbReference>
<dbReference type="GO" id="GO:0000049">
    <property type="term" value="F:tRNA binding"/>
    <property type="evidence" value="ECO:0007669"/>
    <property type="project" value="InterPro"/>
</dbReference>
<dbReference type="GO" id="GO:0008270">
    <property type="term" value="F:zinc ion binding"/>
    <property type="evidence" value="ECO:0007669"/>
    <property type="project" value="InterPro"/>
</dbReference>
<dbReference type="GO" id="GO:0006424">
    <property type="term" value="P:glutamyl-tRNA aminoacylation"/>
    <property type="evidence" value="ECO:0007669"/>
    <property type="project" value="UniProtKB-UniRule"/>
</dbReference>
<dbReference type="CDD" id="cd00808">
    <property type="entry name" value="GluRS_core"/>
    <property type="match status" value="1"/>
</dbReference>
<dbReference type="FunFam" id="1.10.10.350:FF:000002">
    <property type="entry name" value="Glutamate--tRNA ligase"/>
    <property type="match status" value="1"/>
</dbReference>
<dbReference type="FunFam" id="3.40.50.620:FF:000045">
    <property type="entry name" value="Glutamate--tRNA ligase, mitochondrial"/>
    <property type="match status" value="1"/>
</dbReference>
<dbReference type="Gene3D" id="1.10.10.350">
    <property type="match status" value="1"/>
</dbReference>
<dbReference type="Gene3D" id="1.10.8.70">
    <property type="entry name" value="Glutamate-tRNA synthetase, class I, anticodon-binding domain 1"/>
    <property type="match status" value="1"/>
</dbReference>
<dbReference type="Gene3D" id="3.40.50.620">
    <property type="entry name" value="HUPs"/>
    <property type="match status" value="1"/>
</dbReference>
<dbReference type="HAMAP" id="MF_00022">
    <property type="entry name" value="Glu_tRNA_synth_type1"/>
    <property type="match status" value="1"/>
</dbReference>
<dbReference type="InterPro" id="IPR045462">
    <property type="entry name" value="aa-tRNA-synth_I_cd-bd"/>
</dbReference>
<dbReference type="InterPro" id="IPR020751">
    <property type="entry name" value="aa-tRNA-synth_I_codon-bd_sub2"/>
</dbReference>
<dbReference type="InterPro" id="IPR001412">
    <property type="entry name" value="aa-tRNA-synth_I_CS"/>
</dbReference>
<dbReference type="InterPro" id="IPR008925">
    <property type="entry name" value="aa_tRNA-synth_I_cd-bd_sf"/>
</dbReference>
<dbReference type="InterPro" id="IPR004527">
    <property type="entry name" value="Glu-tRNA-ligase_bac/mito"/>
</dbReference>
<dbReference type="InterPro" id="IPR020752">
    <property type="entry name" value="Glu-tRNA-synth_I_codon-bd_sub1"/>
</dbReference>
<dbReference type="InterPro" id="IPR000924">
    <property type="entry name" value="Glu/Gln-tRNA-synth"/>
</dbReference>
<dbReference type="InterPro" id="IPR020058">
    <property type="entry name" value="Glu/Gln-tRNA-synth_Ib_cat-dom"/>
</dbReference>
<dbReference type="InterPro" id="IPR049940">
    <property type="entry name" value="GluQ/Sye"/>
</dbReference>
<dbReference type="InterPro" id="IPR033910">
    <property type="entry name" value="GluRS_core"/>
</dbReference>
<dbReference type="InterPro" id="IPR014729">
    <property type="entry name" value="Rossmann-like_a/b/a_fold"/>
</dbReference>
<dbReference type="NCBIfam" id="TIGR00464">
    <property type="entry name" value="gltX_bact"/>
    <property type="match status" value="1"/>
</dbReference>
<dbReference type="PANTHER" id="PTHR43311">
    <property type="entry name" value="GLUTAMATE--TRNA LIGASE"/>
    <property type="match status" value="1"/>
</dbReference>
<dbReference type="PANTHER" id="PTHR43311:SF2">
    <property type="entry name" value="GLUTAMATE--TRNA LIGASE, MITOCHONDRIAL-RELATED"/>
    <property type="match status" value="1"/>
</dbReference>
<dbReference type="Pfam" id="PF19269">
    <property type="entry name" value="Anticodon_2"/>
    <property type="match status" value="1"/>
</dbReference>
<dbReference type="Pfam" id="PF00749">
    <property type="entry name" value="tRNA-synt_1c"/>
    <property type="match status" value="1"/>
</dbReference>
<dbReference type="PRINTS" id="PR00987">
    <property type="entry name" value="TRNASYNTHGLU"/>
</dbReference>
<dbReference type="SUPFAM" id="SSF48163">
    <property type="entry name" value="An anticodon-binding domain of class I aminoacyl-tRNA synthetases"/>
    <property type="match status" value="1"/>
</dbReference>
<dbReference type="SUPFAM" id="SSF52374">
    <property type="entry name" value="Nucleotidylyl transferase"/>
    <property type="match status" value="1"/>
</dbReference>
<dbReference type="PROSITE" id="PS00178">
    <property type="entry name" value="AA_TRNA_LIGASE_I"/>
    <property type="match status" value="1"/>
</dbReference>
<evidence type="ECO:0000255" key="1">
    <source>
        <dbReference type="HAMAP-Rule" id="MF_00022"/>
    </source>
</evidence>
<feature type="chain" id="PRO_0000119685" description="Glutamate--tRNA ligase 2">
    <location>
        <begin position="1"/>
        <end position="485"/>
    </location>
</feature>
<feature type="short sequence motif" description="'HIGH' region" evidence="1">
    <location>
        <begin position="10"/>
        <end position="20"/>
    </location>
</feature>
<feature type="short sequence motif" description="'KMSKS' region" evidence="1">
    <location>
        <begin position="252"/>
        <end position="256"/>
    </location>
</feature>
<feature type="binding site" evidence="1">
    <location>
        <position position="255"/>
    </location>
    <ligand>
        <name>ATP</name>
        <dbReference type="ChEBI" id="CHEBI:30616"/>
    </ligand>
</feature>
<keyword id="KW-0030">Aminoacyl-tRNA synthetase</keyword>
<keyword id="KW-0067">ATP-binding</keyword>
<keyword id="KW-0963">Cytoplasm</keyword>
<keyword id="KW-0436">Ligase</keyword>
<keyword id="KW-0547">Nucleotide-binding</keyword>
<keyword id="KW-0648">Protein biosynthesis</keyword>
<keyword id="KW-1185">Reference proteome</keyword>
<proteinExistence type="inferred from homology"/>
<name>SYE2_CALS4</name>
<sequence length="485" mass="56824">MKEFRVRFAPSPTGPIHIGNMRTALFNYLFSRSEGATFVLRIEDTDLERSSKGFEELIFKELKWLGIEWDEGPDKPGPYGPYRQSERLEIYHRFAQKLIEEKKAYRCYCTPEELEEDRKKAIERGEIPRYSGRCRYLTKEQEETFIREGRKPVIRFMVPDDEVIEFEDMIKGKITIKSDTLGGDMVIIKSDGMPTYNFAVVIDDALMKITHVIRGEDHIYNTPKQILIYKALGFEIPKFAHVPLILGPDRTKLSKRHGHTYIGQYRELGYLPEAMFNFLSLLSWYPEDNVELMSKEEIIRKFNFKRIHKSNPVFDIEKLNWMNQQYIQKSPVERIVDLAIPHLKKAGYIDEIDELRYNWLKDVISLYKDGLSYVAQIVDMAKTFFVEEVDYTGEMIEFLKSPNSIKVLEAFKGYLKDKSEITEDDVREWMKKAQKELGVKGKEFFMPIRIAVTGEEHGPELVKVLALLGKNRVVKRLDRVLNLIE</sequence>
<protein>
    <recommendedName>
        <fullName evidence="1">Glutamate--tRNA ligase 2</fullName>
        <ecNumber evidence="1">6.1.1.17</ecNumber>
    </recommendedName>
    <alternativeName>
        <fullName evidence="1">Glutamyl-tRNA synthetase 2</fullName>
        <shortName evidence="1">GluRS 2</shortName>
    </alternativeName>
</protein>
<reference key="1">
    <citation type="journal article" date="2002" name="Genome Res.">
        <title>A complete sequence of the T. tengcongensis genome.</title>
        <authorList>
            <person name="Bao Q."/>
            <person name="Tian Y."/>
            <person name="Li W."/>
            <person name="Xu Z."/>
            <person name="Xuan Z."/>
            <person name="Hu S."/>
            <person name="Dong W."/>
            <person name="Yang J."/>
            <person name="Chen Y."/>
            <person name="Xue Y."/>
            <person name="Xu Y."/>
            <person name="Lai X."/>
            <person name="Huang L."/>
            <person name="Dong X."/>
            <person name="Ma Y."/>
            <person name="Ling L."/>
            <person name="Tan H."/>
            <person name="Chen R."/>
            <person name="Wang J."/>
            <person name="Yu J."/>
            <person name="Yang H."/>
        </authorList>
    </citation>
    <scope>NUCLEOTIDE SEQUENCE [LARGE SCALE GENOMIC DNA]</scope>
    <source>
        <strain>DSM 15242 / JCM 11007 / NBRC 100824 / MB4</strain>
    </source>
</reference>
<accession>Q8R7T1</accession>
<gene>
    <name evidence="1" type="primary">gltX2</name>
    <name type="ordered locus">TTE2317</name>
</gene>
<comment type="function">
    <text evidence="1">Catalyzes the attachment of glutamate to tRNA(Glu) in a two-step reaction: glutamate is first activated by ATP to form Glu-AMP and then transferred to the acceptor end of tRNA(Glu).</text>
</comment>
<comment type="catalytic activity">
    <reaction evidence="1">
        <text>tRNA(Glu) + L-glutamate + ATP = L-glutamyl-tRNA(Glu) + AMP + diphosphate</text>
        <dbReference type="Rhea" id="RHEA:23540"/>
        <dbReference type="Rhea" id="RHEA-COMP:9663"/>
        <dbReference type="Rhea" id="RHEA-COMP:9680"/>
        <dbReference type="ChEBI" id="CHEBI:29985"/>
        <dbReference type="ChEBI" id="CHEBI:30616"/>
        <dbReference type="ChEBI" id="CHEBI:33019"/>
        <dbReference type="ChEBI" id="CHEBI:78442"/>
        <dbReference type="ChEBI" id="CHEBI:78520"/>
        <dbReference type="ChEBI" id="CHEBI:456215"/>
        <dbReference type="EC" id="6.1.1.17"/>
    </reaction>
</comment>
<comment type="subunit">
    <text evidence="1">Monomer.</text>
</comment>
<comment type="subcellular location">
    <subcellularLocation>
        <location evidence="1">Cytoplasm</location>
    </subcellularLocation>
</comment>
<comment type="similarity">
    <text evidence="1">Belongs to the class-I aminoacyl-tRNA synthetase family. Glutamate--tRNA ligase type 1 subfamily.</text>
</comment>